<gene>
    <name evidence="1" type="primary">hfq</name>
    <name type="ordered locus">Rleg2_1632</name>
</gene>
<dbReference type="EMBL" id="CP001191">
    <property type="protein sequence ID" value="ACI54922.1"/>
    <property type="molecule type" value="Genomic_DNA"/>
</dbReference>
<dbReference type="RefSeq" id="WP_003539403.1">
    <property type="nucleotide sequence ID" value="NC_011369.1"/>
</dbReference>
<dbReference type="SMR" id="B5ZND2"/>
<dbReference type="STRING" id="395492.Rleg2_1632"/>
<dbReference type="GeneID" id="91148465"/>
<dbReference type="KEGG" id="rlt:Rleg2_1632"/>
<dbReference type="eggNOG" id="COG1923">
    <property type="taxonomic scope" value="Bacteria"/>
</dbReference>
<dbReference type="HOGENOM" id="CLU_113688_0_0_5"/>
<dbReference type="Proteomes" id="UP000008330">
    <property type="component" value="Chromosome"/>
</dbReference>
<dbReference type="GO" id="GO:0005829">
    <property type="term" value="C:cytosol"/>
    <property type="evidence" value="ECO:0007669"/>
    <property type="project" value="TreeGrafter"/>
</dbReference>
<dbReference type="GO" id="GO:0003723">
    <property type="term" value="F:RNA binding"/>
    <property type="evidence" value="ECO:0007669"/>
    <property type="project" value="UniProtKB-UniRule"/>
</dbReference>
<dbReference type="GO" id="GO:0006355">
    <property type="term" value="P:regulation of DNA-templated transcription"/>
    <property type="evidence" value="ECO:0007669"/>
    <property type="project" value="InterPro"/>
</dbReference>
<dbReference type="GO" id="GO:0043487">
    <property type="term" value="P:regulation of RNA stability"/>
    <property type="evidence" value="ECO:0007669"/>
    <property type="project" value="TreeGrafter"/>
</dbReference>
<dbReference type="GO" id="GO:0045974">
    <property type="term" value="P:regulation of translation, ncRNA-mediated"/>
    <property type="evidence" value="ECO:0007669"/>
    <property type="project" value="TreeGrafter"/>
</dbReference>
<dbReference type="CDD" id="cd01716">
    <property type="entry name" value="Hfq"/>
    <property type="match status" value="1"/>
</dbReference>
<dbReference type="Gene3D" id="2.30.30.100">
    <property type="match status" value="1"/>
</dbReference>
<dbReference type="HAMAP" id="MF_00436">
    <property type="entry name" value="Hfq"/>
    <property type="match status" value="1"/>
</dbReference>
<dbReference type="InterPro" id="IPR005001">
    <property type="entry name" value="Hfq"/>
</dbReference>
<dbReference type="InterPro" id="IPR010920">
    <property type="entry name" value="LSM_dom_sf"/>
</dbReference>
<dbReference type="InterPro" id="IPR047575">
    <property type="entry name" value="Sm"/>
</dbReference>
<dbReference type="NCBIfam" id="TIGR02383">
    <property type="entry name" value="Hfq"/>
    <property type="match status" value="1"/>
</dbReference>
<dbReference type="NCBIfam" id="NF001602">
    <property type="entry name" value="PRK00395.1"/>
    <property type="match status" value="1"/>
</dbReference>
<dbReference type="PANTHER" id="PTHR34772">
    <property type="entry name" value="RNA-BINDING PROTEIN HFQ"/>
    <property type="match status" value="1"/>
</dbReference>
<dbReference type="PANTHER" id="PTHR34772:SF1">
    <property type="entry name" value="RNA-BINDING PROTEIN HFQ"/>
    <property type="match status" value="1"/>
</dbReference>
<dbReference type="Pfam" id="PF17209">
    <property type="entry name" value="Hfq"/>
    <property type="match status" value="1"/>
</dbReference>
<dbReference type="SUPFAM" id="SSF50182">
    <property type="entry name" value="Sm-like ribonucleoproteins"/>
    <property type="match status" value="1"/>
</dbReference>
<dbReference type="PROSITE" id="PS52002">
    <property type="entry name" value="SM"/>
    <property type="match status" value="1"/>
</dbReference>
<keyword id="KW-1185">Reference proteome</keyword>
<keyword id="KW-0694">RNA-binding</keyword>
<keyword id="KW-0346">Stress response</keyword>
<name>HFQ_RHILW</name>
<proteinExistence type="inferred from homology"/>
<reference key="1">
    <citation type="journal article" date="2010" name="Stand. Genomic Sci.">
        <title>Complete genome sequence of Rhizobium leguminosarum bv trifolii strain WSM2304, an effective microsymbiont of the South American clover Trifolium polymorphum.</title>
        <authorList>
            <person name="Reeve W."/>
            <person name="O'Hara G."/>
            <person name="Chain P."/>
            <person name="Ardley J."/>
            <person name="Brau L."/>
            <person name="Nandesena K."/>
            <person name="Tiwari R."/>
            <person name="Malfatti S."/>
            <person name="Kiss H."/>
            <person name="Lapidus A."/>
            <person name="Copeland A."/>
            <person name="Nolan M."/>
            <person name="Land M."/>
            <person name="Ivanova N."/>
            <person name="Mavromatis K."/>
            <person name="Markowitz V."/>
            <person name="Kyrpides N."/>
            <person name="Melino V."/>
            <person name="Denton M."/>
            <person name="Yates R."/>
            <person name="Howieson J."/>
        </authorList>
    </citation>
    <scope>NUCLEOTIDE SEQUENCE [LARGE SCALE GENOMIC DNA]</scope>
    <source>
        <strain>WSM2304</strain>
    </source>
</reference>
<sequence length="80" mass="9044">MAERSQNLQDLFLNTVRKQKISLTIFLINGVKLTGVVTSFDNFCVLLRRDGHSQLVYKHAISTIMPGQPMQMFESEEAAS</sequence>
<organism>
    <name type="scientific">Rhizobium leguminosarum bv. trifolii (strain WSM2304)</name>
    <dbReference type="NCBI Taxonomy" id="395492"/>
    <lineage>
        <taxon>Bacteria</taxon>
        <taxon>Pseudomonadati</taxon>
        <taxon>Pseudomonadota</taxon>
        <taxon>Alphaproteobacteria</taxon>
        <taxon>Hyphomicrobiales</taxon>
        <taxon>Rhizobiaceae</taxon>
        <taxon>Rhizobium/Agrobacterium group</taxon>
        <taxon>Rhizobium</taxon>
    </lineage>
</organism>
<accession>B5ZND2</accession>
<feature type="chain" id="PRO_1000190348" description="RNA-binding protein Hfq">
    <location>
        <begin position="1"/>
        <end position="80"/>
    </location>
</feature>
<feature type="domain" description="Sm" evidence="2">
    <location>
        <begin position="10"/>
        <end position="70"/>
    </location>
</feature>
<comment type="function">
    <text evidence="1">RNA chaperone that binds small regulatory RNA (sRNAs) and mRNAs to facilitate mRNA translational regulation in response to envelope stress, environmental stress and changes in metabolite concentrations. Also binds with high specificity to tRNAs.</text>
</comment>
<comment type="subunit">
    <text evidence="1">Homohexamer.</text>
</comment>
<comment type="similarity">
    <text evidence="1">Belongs to the Hfq family.</text>
</comment>
<protein>
    <recommendedName>
        <fullName evidence="1">RNA-binding protein Hfq</fullName>
    </recommendedName>
</protein>
<evidence type="ECO:0000255" key="1">
    <source>
        <dbReference type="HAMAP-Rule" id="MF_00436"/>
    </source>
</evidence>
<evidence type="ECO:0000255" key="2">
    <source>
        <dbReference type="PROSITE-ProRule" id="PRU01346"/>
    </source>
</evidence>